<feature type="chain" id="PRO_0000267742" description="3-hydroxydecanoyl-[acyl-carrier-protein] dehydratase">
    <location>
        <begin position="1"/>
        <end position="171"/>
    </location>
</feature>
<feature type="active site" evidence="1">
    <location>
        <position position="70"/>
    </location>
</feature>
<dbReference type="EC" id="4.2.1.59" evidence="1"/>
<dbReference type="EC" id="5.3.3.14" evidence="1"/>
<dbReference type="EMBL" id="CP000094">
    <property type="protein sequence ID" value="ABA75949.1"/>
    <property type="molecule type" value="Genomic_DNA"/>
</dbReference>
<dbReference type="RefSeq" id="WP_003227150.1">
    <property type="nucleotide sequence ID" value="NC_007492.2"/>
</dbReference>
<dbReference type="SMR" id="Q3K8F5"/>
<dbReference type="GeneID" id="93490540"/>
<dbReference type="KEGG" id="pfo:Pfl01_4212"/>
<dbReference type="eggNOG" id="COG0764">
    <property type="taxonomic scope" value="Bacteria"/>
</dbReference>
<dbReference type="HOGENOM" id="CLU_097925_0_0_6"/>
<dbReference type="UniPathway" id="UPA00094"/>
<dbReference type="Proteomes" id="UP000002704">
    <property type="component" value="Chromosome"/>
</dbReference>
<dbReference type="GO" id="GO:0005737">
    <property type="term" value="C:cytoplasm"/>
    <property type="evidence" value="ECO:0007669"/>
    <property type="project" value="UniProtKB-SubCell"/>
</dbReference>
<dbReference type="GO" id="GO:0019171">
    <property type="term" value="F:(3R)-hydroxyacyl-[acyl-carrier-protein] dehydratase activity"/>
    <property type="evidence" value="ECO:0007669"/>
    <property type="project" value="UniProtKB-UniRule"/>
</dbReference>
<dbReference type="GO" id="GO:0034017">
    <property type="term" value="F:trans-2-decenoyl-acyl-carrier-protein isomerase activity"/>
    <property type="evidence" value="ECO:0007669"/>
    <property type="project" value="UniProtKB-UniRule"/>
</dbReference>
<dbReference type="GO" id="GO:0006636">
    <property type="term" value="P:unsaturated fatty acid biosynthetic process"/>
    <property type="evidence" value="ECO:0007669"/>
    <property type="project" value="UniProtKB-UniRule"/>
</dbReference>
<dbReference type="CDD" id="cd01287">
    <property type="entry name" value="FabA"/>
    <property type="match status" value="1"/>
</dbReference>
<dbReference type="Gene3D" id="3.10.129.10">
    <property type="entry name" value="Hotdog Thioesterase"/>
    <property type="match status" value="1"/>
</dbReference>
<dbReference type="HAMAP" id="MF_00405">
    <property type="entry name" value="FabA"/>
    <property type="match status" value="1"/>
</dbReference>
<dbReference type="InterPro" id="IPR010083">
    <property type="entry name" value="FabA"/>
</dbReference>
<dbReference type="InterPro" id="IPR013114">
    <property type="entry name" value="FabA_FabZ"/>
</dbReference>
<dbReference type="InterPro" id="IPR029069">
    <property type="entry name" value="HotDog_dom_sf"/>
</dbReference>
<dbReference type="NCBIfam" id="TIGR01749">
    <property type="entry name" value="fabA"/>
    <property type="match status" value="1"/>
</dbReference>
<dbReference type="NCBIfam" id="NF003509">
    <property type="entry name" value="PRK05174.1"/>
    <property type="match status" value="1"/>
</dbReference>
<dbReference type="PANTHER" id="PTHR30272">
    <property type="entry name" value="3-HYDROXYACYL-[ACYL-CARRIER-PROTEIN] DEHYDRATASE"/>
    <property type="match status" value="1"/>
</dbReference>
<dbReference type="PANTHER" id="PTHR30272:SF8">
    <property type="entry name" value="3-HYDROXYDECANOYL-[ACYL-CARRIER-PROTEIN] DEHYDRATASE"/>
    <property type="match status" value="1"/>
</dbReference>
<dbReference type="Pfam" id="PF07977">
    <property type="entry name" value="FabA"/>
    <property type="match status" value="1"/>
</dbReference>
<dbReference type="SUPFAM" id="SSF54637">
    <property type="entry name" value="Thioesterase/thiol ester dehydrase-isomerase"/>
    <property type="match status" value="1"/>
</dbReference>
<sequence>MTKQNAFTREDLLRCSRGELFGPGNAQLPAPNMLMVDRITLISEEGGKYGKGELVAELDINPDLWFFACHFEGDPVMPGCLGLDAMWQLVGFFLGWQGLPGRGRALGSGEVKFFGQVLPTAKKVTYNIHIKRVLKGKLNLAIADGSVTVDGREIYTAEGLRVGVFTSTDNF</sequence>
<organism>
    <name type="scientific">Pseudomonas fluorescens (strain Pf0-1)</name>
    <dbReference type="NCBI Taxonomy" id="205922"/>
    <lineage>
        <taxon>Bacteria</taxon>
        <taxon>Pseudomonadati</taxon>
        <taxon>Pseudomonadota</taxon>
        <taxon>Gammaproteobacteria</taxon>
        <taxon>Pseudomonadales</taxon>
        <taxon>Pseudomonadaceae</taxon>
        <taxon>Pseudomonas</taxon>
    </lineage>
</organism>
<keyword id="KW-0963">Cytoplasm</keyword>
<keyword id="KW-0275">Fatty acid biosynthesis</keyword>
<keyword id="KW-0276">Fatty acid metabolism</keyword>
<keyword id="KW-0413">Isomerase</keyword>
<keyword id="KW-0444">Lipid biosynthesis</keyword>
<keyword id="KW-0443">Lipid metabolism</keyword>
<keyword id="KW-0456">Lyase</keyword>
<name>FABA_PSEPF</name>
<protein>
    <recommendedName>
        <fullName evidence="1">3-hydroxydecanoyl-[acyl-carrier-protein] dehydratase</fullName>
        <ecNumber evidence="1">4.2.1.59</ecNumber>
    </recommendedName>
    <alternativeName>
        <fullName evidence="1">3-hydroxyacyl-[acyl-carrier-protein] dehydratase FabA</fullName>
    </alternativeName>
    <alternativeName>
        <fullName evidence="1">Beta-hydroxydecanoyl thioester dehydrase</fullName>
    </alternativeName>
    <alternativeName>
        <fullName evidence="1">Trans-2-decenoyl-[acyl-carrier-protein] isomerase</fullName>
        <ecNumber evidence="1">5.3.3.14</ecNumber>
    </alternativeName>
</protein>
<comment type="function">
    <text evidence="1">Necessary for the introduction of cis unsaturation into fatty acids. Catalyzes the dehydration of (3R)-3-hydroxydecanoyl-ACP to E-(2)-decenoyl-ACP and then its isomerization to Z-(3)-decenoyl-ACP. Can catalyze the dehydratase reaction for beta-hydroxyacyl-ACPs with saturated chain lengths up to 16:0, being most active on intermediate chain length.</text>
</comment>
<comment type="catalytic activity">
    <reaction evidence="1">
        <text>a (3R)-hydroxyacyl-[ACP] = a (2E)-enoyl-[ACP] + H2O</text>
        <dbReference type="Rhea" id="RHEA:13097"/>
        <dbReference type="Rhea" id="RHEA-COMP:9925"/>
        <dbReference type="Rhea" id="RHEA-COMP:9945"/>
        <dbReference type="ChEBI" id="CHEBI:15377"/>
        <dbReference type="ChEBI" id="CHEBI:78784"/>
        <dbReference type="ChEBI" id="CHEBI:78827"/>
        <dbReference type="EC" id="4.2.1.59"/>
    </reaction>
</comment>
<comment type="catalytic activity">
    <reaction evidence="1">
        <text>(3R)-hydroxydecanoyl-[ACP] = (2E)-decenoyl-[ACP] + H2O</text>
        <dbReference type="Rhea" id="RHEA:41860"/>
        <dbReference type="Rhea" id="RHEA-COMP:9638"/>
        <dbReference type="Rhea" id="RHEA-COMP:9639"/>
        <dbReference type="ChEBI" id="CHEBI:15377"/>
        <dbReference type="ChEBI" id="CHEBI:78466"/>
        <dbReference type="ChEBI" id="CHEBI:78467"/>
    </reaction>
</comment>
<comment type="catalytic activity">
    <reaction evidence="1">
        <text>(2E)-decenoyl-[ACP] = (3Z)-decenoyl-[ACP]</text>
        <dbReference type="Rhea" id="RHEA:23568"/>
        <dbReference type="Rhea" id="RHEA-COMP:9639"/>
        <dbReference type="Rhea" id="RHEA-COMP:9927"/>
        <dbReference type="ChEBI" id="CHEBI:78467"/>
        <dbReference type="ChEBI" id="CHEBI:78798"/>
        <dbReference type="EC" id="5.3.3.14"/>
    </reaction>
</comment>
<comment type="pathway">
    <text evidence="1">Lipid metabolism; fatty acid biosynthesis.</text>
</comment>
<comment type="subunit">
    <text evidence="1">Homodimer.</text>
</comment>
<comment type="subcellular location">
    <subcellularLocation>
        <location evidence="1">Cytoplasm</location>
    </subcellularLocation>
</comment>
<comment type="similarity">
    <text evidence="1">Belongs to the thioester dehydratase family. FabA subfamily.</text>
</comment>
<accession>Q3K8F5</accession>
<evidence type="ECO:0000255" key="1">
    <source>
        <dbReference type="HAMAP-Rule" id="MF_00405"/>
    </source>
</evidence>
<reference key="1">
    <citation type="journal article" date="2009" name="Genome Biol.">
        <title>Genomic and genetic analyses of diversity and plant interactions of Pseudomonas fluorescens.</title>
        <authorList>
            <person name="Silby M.W."/>
            <person name="Cerdeno-Tarraga A.M."/>
            <person name="Vernikos G.S."/>
            <person name="Giddens S.R."/>
            <person name="Jackson R.W."/>
            <person name="Preston G.M."/>
            <person name="Zhang X.-X."/>
            <person name="Moon C.D."/>
            <person name="Gehrig S.M."/>
            <person name="Godfrey S.A.C."/>
            <person name="Knight C.G."/>
            <person name="Malone J.G."/>
            <person name="Robinson Z."/>
            <person name="Spiers A.J."/>
            <person name="Harris S."/>
            <person name="Challis G.L."/>
            <person name="Yaxley A.M."/>
            <person name="Harris D."/>
            <person name="Seeger K."/>
            <person name="Murphy L."/>
            <person name="Rutter S."/>
            <person name="Squares R."/>
            <person name="Quail M.A."/>
            <person name="Saunders E."/>
            <person name="Mavromatis K."/>
            <person name="Brettin T.S."/>
            <person name="Bentley S.D."/>
            <person name="Hothersall J."/>
            <person name="Stephens E."/>
            <person name="Thomas C.M."/>
            <person name="Parkhill J."/>
            <person name="Levy S.B."/>
            <person name="Rainey P.B."/>
            <person name="Thomson N.R."/>
        </authorList>
    </citation>
    <scope>NUCLEOTIDE SEQUENCE [LARGE SCALE GENOMIC DNA]</scope>
    <source>
        <strain>Pf0-1</strain>
    </source>
</reference>
<proteinExistence type="inferred from homology"/>
<gene>
    <name evidence="1" type="primary">fabA</name>
    <name type="ordered locus">Pfl01_4212</name>
</gene>